<name>IF1_LEGPL</name>
<sequence>MAKEDHIEMAGTVIDTLPNTMFRVELENGHIVTAHISGRMRKNYIRILTGDKVKVELTPYDLSKGRIIFRDKG</sequence>
<accession>Q5WVS7</accession>
<feature type="chain" id="PRO_0000095809" description="Translation initiation factor IF-1">
    <location>
        <begin position="1"/>
        <end position="73"/>
    </location>
</feature>
<feature type="domain" description="S1-like" evidence="1">
    <location>
        <begin position="1"/>
        <end position="72"/>
    </location>
</feature>
<organism>
    <name type="scientific">Legionella pneumophila (strain Lens)</name>
    <dbReference type="NCBI Taxonomy" id="297245"/>
    <lineage>
        <taxon>Bacteria</taxon>
        <taxon>Pseudomonadati</taxon>
        <taxon>Pseudomonadota</taxon>
        <taxon>Gammaproteobacteria</taxon>
        <taxon>Legionellales</taxon>
        <taxon>Legionellaceae</taxon>
        <taxon>Legionella</taxon>
    </lineage>
</organism>
<keyword id="KW-0963">Cytoplasm</keyword>
<keyword id="KW-0396">Initiation factor</keyword>
<keyword id="KW-0648">Protein biosynthesis</keyword>
<keyword id="KW-0694">RNA-binding</keyword>
<keyword id="KW-0699">rRNA-binding</keyword>
<comment type="function">
    <text evidence="1">One of the essential components for the initiation of protein synthesis. Stabilizes the binding of IF-2 and IF-3 on the 30S subunit to which N-formylmethionyl-tRNA(fMet) subsequently binds. Helps modulate mRNA selection, yielding the 30S pre-initiation complex (PIC). Upon addition of the 50S ribosomal subunit IF-1, IF-2 and IF-3 are released leaving the mature 70S translation initiation complex.</text>
</comment>
<comment type="subunit">
    <text evidence="1">Component of the 30S ribosomal translation pre-initiation complex which assembles on the 30S ribosome in the order IF-2 and IF-3, IF-1 and N-formylmethionyl-tRNA(fMet); mRNA recruitment can occur at any time during PIC assembly.</text>
</comment>
<comment type="subcellular location">
    <subcellularLocation>
        <location evidence="1">Cytoplasm</location>
    </subcellularLocation>
</comment>
<comment type="similarity">
    <text evidence="1">Belongs to the IF-1 family.</text>
</comment>
<proteinExistence type="inferred from homology"/>
<reference key="1">
    <citation type="journal article" date="2004" name="Nat. Genet.">
        <title>Evidence in the Legionella pneumophila genome for exploitation of host cell functions and high genome plasticity.</title>
        <authorList>
            <person name="Cazalet C."/>
            <person name="Rusniok C."/>
            <person name="Brueggemann H."/>
            <person name="Zidane N."/>
            <person name="Magnier A."/>
            <person name="Ma L."/>
            <person name="Tichit M."/>
            <person name="Jarraud S."/>
            <person name="Bouchier C."/>
            <person name="Vandenesch F."/>
            <person name="Kunst F."/>
            <person name="Etienne J."/>
            <person name="Glaser P."/>
            <person name="Buchrieser C."/>
        </authorList>
    </citation>
    <scope>NUCLEOTIDE SEQUENCE [LARGE SCALE GENOMIC DNA]</scope>
    <source>
        <strain>Lens</strain>
    </source>
</reference>
<evidence type="ECO:0000255" key="1">
    <source>
        <dbReference type="HAMAP-Rule" id="MF_00075"/>
    </source>
</evidence>
<dbReference type="EMBL" id="CR628337">
    <property type="protein sequence ID" value="CAH15973.1"/>
    <property type="molecule type" value="Genomic_DNA"/>
</dbReference>
<dbReference type="RefSeq" id="WP_010947496.1">
    <property type="nucleotide sequence ID" value="NC_006369.1"/>
</dbReference>
<dbReference type="SMR" id="Q5WVS7"/>
<dbReference type="GeneID" id="57035759"/>
<dbReference type="KEGG" id="lpf:lpl1734"/>
<dbReference type="LegioList" id="lpl1734"/>
<dbReference type="HOGENOM" id="CLU_151267_1_0_6"/>
<dbReference type="Proteomes" id="UP000002517">
    <property type="component" value="Chromosome"/>
</dbReference>
<dbReference type="GO" id="GO:0005829">
    <property type="term" value="C:cytosol"/>
    <property type="evidence" value="ECO:0007669"/>
    <property type="project" value="TreeGrafter"/>
</dbReference>
<dbReference type="GO" id="GO:0043022">
    <property type="term" value="F:ribosome binding"/>
    <property type="evidence" value="ECO:0007669"/>
    <property type="project" value="UniProtKB-UniRule"/>
</dbReference>
<dbReference type="GO" id="GO:0019843">
    <property type="term" value="F:rRNA binding"/>
    <property type="evidence" value="ECO:0007669"/>
    <property type="project" value="UniProtKB-UniRule"/>
</dbReference>
<dbReference type="GO" id="GO:0003743">
    <property type="term" value="F:translation initiation factor activity"/>
    <property type="evidence" value="ECO:0007669"/>
    <property type="project" value="UniProtKB-UniRule"/>
</dbReference>
<dbReference type="CDD" id="cd04451">
    <property type="entry name" value="S1_IF1"/>
    <property type="match status" value="1"/>
</dbReference>
<dbReference type="FunFam" id="2.40.50.140:FF:000002">
    <property type="entry name" value="Translation initiation factor IF-1"/>
    <property type="match status" value="1"/>
</dbReference>
<dbReference type="Gene3D" id="2.40.50.140">
    <property type="entry name" value="Nucleic acid-binding proteins"/>
    <property type="match status" value="1"/>
</dbReference>
<dbReference type="HAMAP" id="MF_00075">
    <property type="entry name" value="IF_1"/>
    <property type="match status" value="1"/>
</dbReference>
<dbReference type="InterPro" id="IPR012340">
    <property type="entry name" value="NA-bd_OB-fold"/>
</dbReference>
<dbReference type="InterPro" id="IPR006196">
    <property type="entry name" value="RNA-binding_domain_S1_IF1"/>
</dbReference>
<dbReference type="InterPro" id="IPR003029">
    <property type="entry name" value="S1_domain"/>
</dbReference>
<dbReference type="InterPro" id="IPR004368">
    <property type="entry name" value="TIF_IF1"/>
</dbReference>
<dbReference type="NCBIfam" id="TIGR00008">
    <property type="entry name" value="infA"/>
    <property type="match status" value="1"/>
</dbReference>
<dbReference type="PANTHER" id="PTHR33370">
    <property type="entry name" value="TRANSLATION INITIATION FACTOR IF-1, CHLOROPLASTIC"/>
    <property type="match status" value="1"/>
</dbReference>
<dbReference type="PANTHER" id="PTHR33370:SF1">
    <property type="entry name" value="TRANSLATION INITIATION FACTOR IF-1, CHLOROPLASTIC"/>
    <property type="match status" value="1"/>
</dbReference>
<dbReference type="Pfam" id="PF01176">
    <property type="entry name" value="eIF-1a"/>
    <property type="match status" value="1"/>
</dbReference>
<dbReference type="SMART" id="SM00316">
    <property type="entry name" value="S1"/>
    <property type="match status" value="1"/>
</dbReference>
<dbReference type="SUPFAM" id="SSF50249">
    <property type="entry name" value="Nucleic acid-binding proteins"/>
    <property type="match status" value="1"/>
</dbReference>
<dbReference type="PROSITE" id="PS50832">
    <property type="entry name" value="S1_IF1_TYPE"/>
    <property type="match status" value="1"/>
</dbReference>
<gene>
    <name evidence="1" type="primary">infA</name>
    <name type="ordered locus">lpl1734</name>
</gene>
<protein>
    <recommendedName>
        <fullName evidence="1">Translation initiation factor IF-1</fullName>
    </recommendedName>
</protein>